<protein>
    <recommendedName>
        <fullName evidence="1">Cell division protein ZapD</fullName>
    </recommendedName>
    <alternativeName>
        <fullName evidence="1">Z ring-associated protein D</fullName>
    </alternativeName>
</protein>
<accession>P67690</accession>
<accession>Q7VSV6</accession>
<accession>Q7W3R9</accession>
<accession>Q7WF47</accession>
<name>ZAPD_BORPE</name>
<comment type="function">
    <text evidence="1">Cell division factor that enhances FtsZ-ring assembly. Directly interacts with FtsZ and promotes bundling of FtsZ protofilaments, with a reduction in FtsZ GTPase activity.</text>
</comment>
<comment type="subunit">
    <text evidence="1">Interacts with FtsZ.</text>
</comment>
<comment type="subcellular location">
    <subcellularLocation>
        <location evidence="1">Cytoplasm</location>
    </subcellularLocation>
    <text evidence="1">Localizes to mid-cell in an FtsZ-dependent manner.</text>
</comment>
<comment type="similarity">
    <text evidence="1">Belongs to the ZapD family.</text>
</comment>
<keyword id="KW-0131">Cell cycle</keyword>
<keyword id="KW-0132">Cell division</keyword>
<keyword id="KW-0963">Cytoplasm</keyword>
<keyword id="KW-1185">Reference proteome</keyword>
<keyword id="KW-0717">Septation</keyword>
<proteinExistence type="inferred from homology"/>
<evidence type="ECO:0000255" key="1">
    <source>
        <dbReference type="HAMAP-Rule" id="MF_01092"/>
    </source>
</evidence>
<feature type="chain" id="PRO_0000211660" description="Cell division protein ZapD">
    <location>
        <begin position="1"/>
        <end position="253"/>
    </location>
</feature>
<reference key="1">
    <citation type="journal article" date="2003" name="Nat. Genet.">
        <title>Comparative analysis of the genome sequences of Bordetella pertussis, Bordetella parapertussis and Bordetella bronchiseptica.</title>
        <authorList>
            <person name="Parkhill J."/>
            <person name="Sebaihia M."/>
            <person name="Preston A."/>
            <person name="Murphy L.D."/>
            <person name="Thomson N.R."/>
            <person name="Harris D.E."/>
            <person name="Holden M.T.G."/>
            <person name="Churcher C.M."/>
            <person name="Bentley S.D."/>
            <person name="Mungall K.L."/>
            <person name="Cerdeno-Tarraga A.-M."/>
            <person name="Temple L."/>
            <person name="James K.D."/>
            <person name="Harris B."/>
            <person name="Quail M.A."/>
            <person name="Achtman M."/>
            <person name="Atkin R."/>
            <person name="Baker S."/>
            <person name="Basham D."/>
            <person name="Bason N."/>
            <person name="Cherevach I."/>
            <person name="Chillingworth T."/>
            <person name="Collins M."/>
            <person name="Cronin A."/>
            <person name="Davis P."/>
            <person name="Doggett J."/>
            <person name="Feltwell T."/>
            <person name="Goble A."/>
            <person name="Hamlin N."/>
            <person name="Hauser H."/>
            <person name="Holroyd S."/>
            <person name="Jagels K."/>
            <person name="Leather S."/>
            <person name="Moule S."/>
            <person name="Norberczak H."/>
            <person name="O'Neil S."/>
            <person name="Ormond D."/>
            <person name="Price C."/>
            <person name="Rabbinowitsch E."/>
            <person name="Rutter S."/>
            <person name="Sanders M."/>
            <person name="Saunders D."/>
            <person name="Seeger K."/>
            <person name="Sharp S."/>
            <person name="Simmonds M."/>
            <person name="Skelton J."/>
            <person name="Squares R."/>
            <person name="Squares S."/>
            <person name="Stevens K."/>
            <person name="Unwin L."/>
            <person name="Whitehead S."/>
            <person name="Barrell B.G."/>
            <person name="Maskell D.J."/>
        </authorList>
    </citation>
    <scope>NUCLEOTIDE SEQUENCE [LARGE SCALE GENOMIC DNA]</scope>
    <source>
        <strain>Tohama I / ATCC BAA-589 / NCTC 13251</strain>
    </source>
</reference>
<organism>
    <name type="scientific">Bordetella pertussis (strain Tohama I / ATCC BAA-589 / NCTC 13251)</name>
    <dbReference type="NCBI Taxonomy" id="257313"/>
    <lineage>
        <taxon>Bacteria</taxon>
        <taxon>Pseudomonadati</taxon>
        <taxon>Pseudomonadota</taxon>
        <taxon>Betaproteobacteria</taxon>
        <taxon>Burkholderiales</taxon>
        <taxon>Alcaligenaceae</taxon>
        <taxon>Bordetella</taxon>
    </lineage>
</organism>
<sequence>MASVILYEYPFNERIRAYLRLEYLFDRLFFFAREGDARLHQIAVSSLFDLLDASERTDIKGAVLQDLERQRMALVGLRDHPGVAQDALEAMLRDMERVVAALAAQGKTGQALRENEWLVSLRGRLAVPGGATQVDMPSYHAWQNKPESVRCADLQSWLAPLLPLHEGLSMALRLLRESGRRADIAAEQGGYQQMLAGKIYHLLRVWVDPSLGVFPEISANKYMVWIRFSTQDGEVKPQQVSRDVAFQMSLCSS</sequence>
<dbReference type="EMBL" id="BX640422">
    <property type="protein sequence ID" value="CAE44071.1"/>
    <property type="molecule type" value="Genomic_DNA"/>
</dbReference>
<dbReference type="RefSeq" id="NP_882314.1">
    <property type="nucleotide sequence ID" value="NC_002929.2"/>
</dbReference>
<dbReference type="SMR" id="P67690"/>
<dbReference type="STRING" id="257313.BP3816"/>
<dbReference type="PaxDb" id="257313-BP3816"/>
<dbReference type="KEGG" id="bpe:BP3816"/>
<dbReference type="PATRIC" id="fig|257313.5.peg.4124"/>
<dbReference type="eggNOG" id="COG4582">
    <property type="taxonomic scope" value="Bacteria"/>
</dbReference>
<dbReference type="HOGENOM" id="CLU_076303_0_1_4"/>
<dbReference type="Proteomes" id="UP000002676">
    <property type="component" value="Chromosome"/>
</dbReference>
<dbReference type="GO" id="GO:0032153">
    <property type="term" value="C:cell division site"/>
    <property type="evidence" value="ECO:0007669"/>
    <property type="project" value="TreeGrafter"/>
</dbReference>
<dbReference type="GO" id="GO:0005737">
    <property type="term" value="C:cytoplasm"/>
    <property type="evidence" value="ECO:0007669"/>
    <property type="project" value="UniProtKB-SubCell"/>
</dbReference>
<dbReference type="GO" id="GO:0000917">
    <property type="term" value="P:division septum assembly"/>
    <property type="evidence" value="ECO:0007669"/>
    <property type="project" value="UniProtKB-KW"/>
</dbReference>
<dbReference type="GO" id="GO:0043093">
    <property type="term" value="P:FtsZ-dependent cytokinesis"/>
    <property type="evidence" value="ECO:0007669"/>
    <property type="project" value="UniProtKB-UniRule"/>
</dbReference>
<dbReference type="Gene3D" id="1.10.3900.10">
    <property type="entry name" value="YacF-like"/>
    <property type="match status" value="1"/>
</dbReference>
<dbReference type="Gene3D" id="2.60.440.10">
    <property type="entry name" value="YacF-like domains"/>
    <property type="match status" value="1"/>
</dbReference>
<dbReference type="HAMAP" id="MF_01092">
    <property type="entry name" value="ZapD"/>
    <property type="match status" value="1"/>
</dbReference>
<dbReference type="InterPro" id="IPR009777">
    <property type="entry name" value="ZapD"/>
</dbReference>
<dbReference type="InterPro" id="IPR027462">
    <property type="entry name" value="ZapD_C"/>
</dbReference>
<dbReference type="InterPro" id="IPR036268">
    <property type="entry name" value="ZapD_sf"/>
</dbReference>
<dbReference type="NCBIfam" id="NF003656">
    <property type="entry name" value="PRK05287.1-4"/>
    <property type="match status" value="1"/>
</dbReference>
<dbReference type="PANTHER" id="PTHR39455">
    <property type="entry name" value="CELL DIVISION PROTEIN ZAPD"/>
    <property type="match status" value="1"/>
</dbReference>
<dbReference type="PANTHER" id="PTHR39455:SF1">
    <property type="entry name" value="CELL DIVISION PROTEIN ZAPD"/>
    <property type="match status" value="1"/>
</dbReference>
<dbReference type="Pfam" id="PF07072">
    <property type="entry name" value="ZapD"/>
    <property type="match status" value="1"/>
</dbReference>
<dbReference type="SUPFAM" id="SSF160950">
    <property type="entry name" value="YacF-like"/>
    <property type="match status" value="1"/>
</dbReference>
<gene>
    <name evidence="1" type="primary">zapD</name>
    <name type="ordered locus">BP3816</name>
</gene>